<proteinExistence type="inferred from homology"/>
<feature type="chain" id="PRO_0000382489" description="Probable cytosolic iron-sulfur protein assembly protein Ciao1">
    <location>
        <begin position="1"/>
        <end position="335"/>
    </location>
</feature>
<feature type="repeat" description="WD 1">
    <location>
        <begin position="12"/>
        <end position="51"/>
    </location>
</feature>
<feature type="repeat" description="WD 2">
    <location>
        <begin position="57"/>
        <end position="96"/>
    </location>
</feature>
<feature type="repeat" description="WD 3">
    <location>
        <begin position="101"/>
        <end position="140"/>
    </location>
</feature>
<feature type="repeat" description="WD 4">
    <location>
        <begin position="146"/>
        <end position="185"/>
    </location>
</feature>
<feature type="repeat" description="WD 5">
    <location>
        <begin position="192"/>
        <end position="231"/>
    </location>
</feature>
<feature type="repeat" description="WD 6">
    <location>
        <begin position="250"/>
        <end position="289"/>
    </location>
</feature>
<feature type="repeat" description="WD 7">
    <location>
        <begin position="301"/>
        <end position="335"/>
    </location>
</feature>
<protein>
    <recommendedName>
        <fullName evidence="1">Probable cytosolic iron-sulfur protein assembly protein Ciao1</fullName>
    </recommendedName>
</protein>
<reference key="1">
    <citation type="journal article" date="2005" name="Genome Res.">
        <title>Comparative genome sequencing of Drosophila pseudoobscura: chromosomal, gene, and cis-element evolution.</title>
        <authorList>
            <person name="Richards S."/>
            <person name="Liu Y."/>
            <person name="Bettencourt B.R."/>
            <person name="Hradecky P."/>
            <person name="Letovsky S."/>
            <person name="Nielsen R."/>
            <person name="Thornton K."/>
            <person name="Hubisz M.J."/>
            <person name="Chen R."/>
            <person name="Meisel R.P."/>
            <person name="Couronne O."/>
            <person name="Hua S."/>
            <person name="Smith M.A."/>
            <person name="Zhang P."/>
            <person name="Liu J."/>
            <person name="Bussemaker H.J."/>
            <person name="van Batenburg M.F."/>
            <person name="Howells S.L."/>
            <person name="Scherer S.E."/>
            <person name="Sodergren E."/>
            <person name="Matthews B.B."/>
            <person name="Crosby M.A."/>
            <person name="Schroeder A.J."/>
            <person name="Ortiz-Barrientos D."/>
            <person name="Rives C.M."/>
            <person name="Metzker M.L."/>
            <person name="Muzny D.M."/>
            <person name="Scott G."/>
            <person name="Steffen D."/>
            <person name="Wheeler D.A."/>
            <person name="Worley K.C."/>
            <person name="Havlak P."/>
            <person name="Durbin K.J."/>
            <person name="Egan A."/>
            <person name="Gill R."/>
            <person name="Hume J."/>
            <person name="Morgan M.B."/>
            <person name="Miner G."/>
            <person name="Hamilton C."/>
            <person name="Huang Y."/>
            <person name="Waldron L."/>
            <person name="Verduzco D."/>
            <person name="Clerc-Blankenburg K.P."/>
            <person name="Dubchak I."/>
            <person name="Noor M.A.F."/>
            <person name="Anderson W."/>
            <person name="White K.P."/>
            <person name="Clark A.G."/>
            <person name="Schaeffer S.W."/>
            <person name="Gelbart W.M."/>
            <person name="Weinstock G.M."/>
            <person name="Gibbs R.A."/>
        </authorList>
    </citation>
    <scope>NUCLEOTIDE SEQUENCE [LARGE SCALE GENOMIC DNA]</scope>
    <source>
        <strain>MV2-25 / Tucson 14011-0121.94</strain>
    </source>
</reference>
<name>CIAO1_DROPS</name>
<accession>Q292E8</accession>
<evidence type="ECO:0000255" key="1">
    <source>
        <dbReference type="HAMAP-Rule" id="MF_03037"/>
    </source>
</evidence>
<organism>
    <name type="scientific">Drosophila pseudoobscura pseudoobscura</name>
    <name type="common">Fruit fly</name>
    <dbReference type="NCBI Taxonomy" id="46245"/>
    <lineage>
        <taxon>Eukaryota</taxon>
        <taxon>Metazoa</taxon>
        <taxon>Ecdysozoa</taxon>
        <taxon>Arthropoda</taxon>
        <taxon>Hexapoda</taxon>
        <taxon>Insecta</taxon>
        <taxon>Pterygota</taxon>
        <taxon>Neoptera</taxon>
        <taxon>Endopterygota</taxon>
        <taxon>Diptera</taxon>
        <taxon>Brachycera</taxon>
        <taxon>Muscomorpha</taxon>
        <taxon>Ephydroidea</taxon>
        <taxon>Drosophilidae</taxon>
        <taxon>Drosophila</taxon>
        <taxon>Sophophora</taxon>
    </lineage>
</organism>
<keyword id="KW-1185">Reference proteome</keyword>
<keyword id="KW-0677">Repeat</keyword>
<keyword id="KW-0853">WD repeat</keyword>
<gene>
    <name evidence="1" type="primary">Ciao1</name>
    <name type="ORF">GA11817</name>
</gene>
<sequence>MGRLILEHTLQGHKGRIWGVAWHPKGNVFASCGEDKAIRVWSLSGNTWSTKTILSDGHKRTIREIRWSPCGQYLASASFDATTAIWSKSSGEFECNATLEGHENEVKSVSWSRSGGLLATCSRDKSVWIWEVAGDDEFECAAVLNAHTQDVKRVVWHPTKDILASASYDNTIKMFAESQLDSDWDCTATLSSHTSTVWSIDFDAEGDRLVSCSDDKTLKIWRAYHPGNDAGIATPDKQSVWKCVCTLSGQHSRAIYDVSWCKLTGLIATGCGDDGIRIFKETSDSKRDEPTFEQLTAEETAHEQDVNAVEWNPAVAGQLISCSDDGTIKIWKVDD</sequence>
<comment type="function">
    <text evidence="1">Essential component of the cytosolic iron-sulfur (Fe/S) protein assembly machinery. Required for the maturation of extramitochondrial Fe/S proteins.</text>
</comment>
<comment type="similarity">
    <text evidence="1">Belongs to the WD repeat CIA1 family.</text>
</comment>
<dbReference type="EMBL" id="CM000071">
    <property type="protein sequence ID" value="EAL24914.1"/>
    <property type="molecule type" value="Genomic_DNA"/>
</dbReference>
<dbReference type="RefSeq" id="XP_001360339.1">
    <property type="nucleotide sequence ID" value="XM_001360302.3"/>
</dbReference>
<dbReference type="SMR" id="Q292E8"/>
<dbReference type="FunCoup" id="Q292E8">
    <property type="interactions" value="699"/>
</dbReference>
<dbReference type="STRING" id="46245.Q292E8"/>
<dbReference type="EnsemblMetazoa" id="FBtr0278560">
    <property type="protein sequence ID" value="FBpp0276998"/>
    <property type="gene ID" value="FBgn0071866"/>
</dbReference>
<dbReference type="GeneID" id="4803656"/>
<dbReference type="KEGG" id="dpo:4803656"/>
<dbReference type="CTD" id="9391"/>
<dbReference type="eggNOG" id="KOG0645">
    <property type="taxonomic scope" value="Eukaryota"/>
</dbReference>
<dbReference type="HOGENOM" id="CLU_000288_57_8_1"/>
<dbReference type="InParanoid" id="Q292E8"/>
<dbReference type="OMA" id="IREIRWS"/>
<dbReference type="PhylomeDB" id="Q292E8"/>
<dbReference type="Proteomes" id="UP000001819">
    <property type="component" value="Chromosome 3"/>
</dbReference>
<dbReference type="Bgee" id="FBgn0071866">
    <property type="expression patterns" value="Expressed in female reproductive system and 2 other cell types or tissues"/>
</dbReference>
<dbReference type="GO" id="GO:0097361">
    <property type="term" value="C:cytosolic [4Fe-4S] assembly targeting complex"/>
    <property type="evidence" value="ECO:0007669"/>
    <property type="project" value="InterPro"/>
</dbReference>
<dbReference type="GO" id="GO:0016226">
    <property type="term" value="P:iron-sulfur cluster assembly"/>
    <property type="evidence" value="ECO:0007669"/>
    <property type="project" value="UniProtKB-UniRule"/>
</dbReference>
<dbReference type="GO" id="GO:0051604">
    <property type="term" value="P:protein maturation"/>
    <property type="evidence" value="ECO:0000250"/>
    <property type="project" value="UniProtKB"/>
</dbReference>
<dbReference type="CDD" id="cd00200">
    <property type="entry name" value="WD40"/>
    <property type="match status" value="1"/>
</dbReference>
<dbReference type="FunFam" id="2.130.10.10:FF:000136">
    <property type="entry name" value="Probable cytosolic iron-sulfur protein assembly protein CIAO1"/>
    <property type="match status" value="1"/>
</dbReference>
<dbReference type="Gene3D" id="2.130.10.10">
    <property type="entry name" value="YVTN repeat-like/Quinoprotein amine dehydrogenase"/>
    <property type="match status" value="1"/>
</dbReference>
<dbReference type="HAMAP" id="MF_03037">
    <property type="entry name" value="ciao1"/>
    <property type="match status" value="1"/>
</dbReference>
<dbReference type="InterPro" id="IPR028608">
    <property type="entry name" value="CIAO1/Cia1"/>
</dbReference>
<dbReference type="InterPro" id="IPR020472">
    <property type="entry name" value="G-protein_beta_WD-40_rep"/>
</dbReference>
<dbReference type="InterPro" id="IPR015943">
    <property type="entry name" value="WD40/YVTN_repeat-like_dom_sf"/>
</dbReference>
<dbReference type="InterPro" id="IPR019775">
    <property type="entry name" value="WD40_repeat_CS"/>
</dbReference>
<dbReference type="InterPro" id="IPR036322">
    <property type="entry name" value="WD40_repeat_dom_sf"/>
</dbReference>
<dbReference type="InterPro" id="IPR001680">
    <property type="entry name" value="WD40_rpt"/>
</dbReference>
<dbReference type="PANTHER" id="PTHR19920:SF0">
    <property type="entry name" value="CYTOSOLIC IRON-SULFUR PROTEIN ASSEMBLY PROTEIN CIAO1-RELATED"/>
    <property type="match status" value="1"/>
</dbReference>
<dbReference type="PANTHER" id="PTHR19920">
    <property type="entry name" value="WD40 PROTEIN CIAO1"/>
    <property type="match status" value="1"/>
</dbReference>
<dbReference type="Pfam" id="PF00400">
    <property type="entry name" value="WD40"/>
    <property type="match status" value="7"/>
</dbReference>
<dbReference type="PRINTS" id="PR00320">
    <property type="entry name" value="GPROTEINBRPT"/>
</dbReference>
<dbReference type="SMART" id="SM00320">
    <property type="entry name" value="WD40"/>
    <property type="match status" value="7"/>
</dbReference>
<dbReference type="SUPFAM" id="SSF50978">
    <property type="entry name" value="WD40 repeat-like"/>
    <property type="match status" value="1"/>
</dbReference>
<dbReference type="PROSITE" id="PS00678">
    <property type="entry name" value="WD_REPEATS_1"/>
    <property type="match status" value="1"/>
</dbReference>
<dbReference type="PROSITE" id="PS50082">
    <property type="entry name" value="WD_REPEATS_2"/>
    <property type="match status" value="6"/>
</dbReference>
<dbReference type="PROSITE" id="PS50294">
    <property type="entry name" value="WD_REPEATS_REGION"/>
    <property type="match status" value="1"/>
</dbReference>